<evidence type="ECO:0000255" key="1">
    <source>
        <dbReference type="PROSITE-ProRule" id="PRU00303"/>
    </source>
</evidence>
<evidence type="ECO:0000305" key="2"/>
<sequence length="254" mass="25713">MTEIRYVRLLTLVLASSVLLAGCSSAVPTTPVRSATPSAAATPTATPVVPPTVNPAATASLHAAARSGDAEAVRSALAAGAAIEDRGEGGRTPLVEAAKGNHVEAARALIEAGADVNAKDDIQDSAYLYAGAEGYLEILRMTLTTGADVNAKNRFNGTALIPASEHAHTEVVRMLIAAGVDLDHVNTPGWTAMQEAIVLGNGGAGAQDVVRQLLAAGANPDIRDSRGRTSLCNATRLGFGAIASQLRAAGATGC</sequence>
<accession>Q6AFL2</accession>
<comment type="subcellular location">
    <subcellularLocation>
        <location evidence="1">Cell membrane</location>
        <topology evidence="1">Lipid-anchor</topology>
    </subcellularLocation>
</comment>
<comment type="sequence caution" evidence="2">
    <conflict type="erroneous initiation">
        <sequence resource="EMBL-CDS" id="AAT88833"/>
    </conflict>
</comment>
<organism>
    <name type="scientific">Leifsonia xyli subsp. xyli (strain CTCB07)</name>
    <dbReference type="NCBI Taxonomy" id="281090"/>
    <lineage>
        <taxon>Bacteria</taxon>
        <taxon>Bacillati</taxon>
        <taxon>Actinomycetota</taxon>
        <taxon>Actinomycetes</taxon>
        <taxon>Micrococcales</taxon>
        <taxon>Microbacteriaceae</taxon>
        <taxon>Leifsonia</taxon>
    </lineage>
</organism>
<dbReference type="EMBL" id="AE016822">
    <property type="protein sequence ID" value="AAT88833.1"/>
    <property type="status" value="ALT_INIT"/>
    <property type="molecule type" value="Genomic_DNA"/>
</dbReference>
<dbReference type="RefSeq" id="WP_041767377.1">
    <property type="nucleotide sequence ID" value="NC_006087.1"/>
</dbReference>
<dbReference type="SMR" id="Q6AFL2"/>
<dbReference type="STRING" id="281090.Lxx09580"/>
<dbReference type="KEGG" id="lxx:Lxx09580"/>
<dbReference type="eggNOG" id="COG0666">
    <property type="taxonomic scope" value="Bacteria"/>
</dbReference>
<dbReference type="HOGENOM" id="CLU_000134_18_13_11"/>
<dbReference type="Proteomes" id="UP000001306">
    <property type="component" value="Chromosome"/>
</dbReference>
<dbReference type="GO" id="GO:0005886">
    <property type="term" value="C:plasma membrane"/>
    <property type="evidence" value="ECO:0007669"/>
    <property type="project" value="UniProtKB-SubCell"/>
</dbReference>
<dbReference type="Gene3D" id="1.25.40.20">
    <property type="entry name" value="Ankyrin repeat-containing domain"/>
    <property type="match status" value="1"/>
</dbReference>
<dbReference type="InterPro" id="IPR002110">
    <property type="entry name" value="Ankyrin_rpt"/>
</dbReference>
<dbReference type="InterPro" id="IPR036770">
    <property type="entry name" value="Ankyrin_rpt-contain_sf"/>
</dbReference>
<dbReference type="PANTHER" id="PTHR24188">
    <property type="entry name" value="ANKYRIN REPEAT PROTEIN"/>
    <property type="match status" value="1"/>
</dbReference>
<dbReference type="PANTHER" id="PTHR24188:SF29">
    <property type="entry name" value="GH09064P"/>
    <property type="match status" value="1"/>
</dbReference>
<dbReference type="Pfam" id="PF12796">
    <property type="entry name" value="Ank_2"/>
    <property type="match status" value="2"/>
</dbReference>
<dbReference type="PRINTS" id="PR01415">
    <property type="entry name" value="ANKYRIN"/>
</dbReference>
<dbReference type="SMART" id="SM00248">
    <property type="entry name" value="ANK"/>
    <property type="match status" value="5"/>
</dbReference>
<dbReference type="SUPFAM" id="SSF48403">
    <property type="entry name" value="Ankyrin repeat"/>
    <property type="match status" value="1"/>
</dbReference>
<dbReference type="PROSITE" id="PS50297">
    <property type="entry name" value="ANK_REP_REGION"/>
    <property type="match status" value="1"/>
</dbReference>
<dbReference type="PROSITE" id="PS50088">
    <property type="entry name" value="ANK_REPEAT"/>
    <property type="match status" value="4"/>
</dbReference>
<dbReference type="PROSITE" id="PS51257">
    <property type="entry name" value="PROKAR_LIPOPROTEIN"/>
    <property type="match status" value="1"/>
</dbReference>
<name>Y958_LEIXX</name>
<feature type="signal peptide" evidence="1">
    <location>
        <begin position="1"/>
        <end position="22"/>
    </location>
</feature>
<feature type="chain" id="PRO_0000281029" description="Putative ankyrin-containing lipoprotein Lxx09580">
    <location>
        <begin position="23"/>
        <end position="254"/>
    </location>
</feature>
<feature type="repeat" description="ANK 1">
    <location>
        <begin position="56"/>
        <end position="85"/>
    </location>
</feature>
<feature type="repeat" description="ANK 2">
    <location>
        <begin position="89"/>
        <end position="118"/>
    </location>
</feature>
<feature type="repeat" description="ANK 3">
    <location>
        <begin position="122"/>
        <end position="151"/>
    </location>
</feature>
<feature type="repeat" description="ANK 4">
    <location>
        <begin position="155"/>
        <end position="184"/>
    </location>
</feature>
<feature type="repeat" description="ANK 5">
    <location>
        <begin position="188"/>
        <end position="222"/>
    </location>
</feature>
<feature type="lipid moiety-binding region" description="N-palmitoyl cysteine" evidence="1">
    <location>
        <position position="23"/>
    </location>
</feature>
<feature type="lipid moiety-binding region" description="S-diacylglycerol cysteine" evidence="1">
    <location>
        <position position="23"/>
    </location>
</feature>
<keyword id="KW-0040">ANK repeat</keyword>
<keyword id="KW-1003">Cell membrane</keyword>
<keyword id="KW-0449">Lipoprotein</keyword>
<keyword id="KW-0472">Membrane</keyword>
<keyword id="KW-0564">Palmitate</keyword>
<keyword id="KW-1185">Reference proteome</keyword>
<keyword id="KW-0677">Repeat</keyword>
<keyword id="KW-0732">Signal</keyword>
<protein>
    <recommendedName>
        <fullName>Putative ankyrin-containing lipoprotein Lxx09580</fullName>
    </recommendedName>
</protein>
<gene>
    <name type="ordered locus">Lxx09580</name>
</gene>
<reference key="1">
    <citation type="journal article" date="2004" name="Mol. Plant Microbe Interact.">
        <title>The genome sequence of the Gram-positive sugarcane pathogen Leifsonia xyli subsp. xyli.</title>
        <authorList>
            <person name="Monteiro-Vitorello C.B."/>
            <person name="Camargo L.E.A."/>
            <person name="Van Sluys M.A."/>
            <person name="Kitajima J.P."/>
            <person name="Truffi D."/>
            <person name="do Amaral A.M."/>
            <person name="Harakava R."/>
            <person name="de Oliveira J.C.F."/>
            <person name="Wood D."/>
            <person name="de Oliveira M.C."/>
            <person name="Miyaki C.Y."/>
            <person name="Takita M.A."/>
            <person name="da Silva A.C.R."/>
            <person name="Furlan L.R."/>
            <person name="Carraro D.M."/>
            <person name="Camarotte G."/>
            <person name="Almeida N.F. Jr."/>
            <person name="Carrer H."/>
            <person name="Coutinho L.L."/>
            <person name="El-Dorry H.A."/>
            <person name="Ferro M.I.T."/>
            <person name="Gagliardi P.R."/>
            <person name="Giglioti E."/>
            <person name="Goldman M.H.S."/>
            <person name="Goldman G.H."/>
            <person name="Kimura E.T."/>
            <person name="Ferro E.S."/>
            <person name="Kuramae E.E."/>
            <person name="Lemos E.G.M."/>
            <person name="Lemos M.V.F."/>
            <person name="Mauro S.M.Z."/>
            <person name="Machado M.A."/>
            <person name="Marino C.L."/>
            <person name="Menck C.F."/>
            <person name="Nunes L.R."/>
            <person name="Oliveira R.C."/>
            <person name="Pereira G.G."/>
            <person name="Siqueira W."/>
            <person name="de Souza A.A."/>
            <person name="Tsai S.M."/>
            <person name="Zanca A.S."/>
            <person name="Simpson A.J.G."/>
            <person name="Brumbley S.M."/>
            <person name="Setubal J.C."/>
        </authorList>
    </citation>
    <scope>NUCLEOTIDE SEQUENCE [LARGE SCALE GENOMIC DNA]</scope>
    <source>
        <strain>CTCB07</strain>
    </source>
</reference>
<reference key="2">
    <citation type="journal article" date="2007" name="Mol. Plant Pathol.">
        <title>Putative lipoproteins identified by bioinformatic genome analysis of Leifsonia xyli ssp. xyli, the causative agent of sugarcane ratoon stunting disease.</title>
        <authorList>
            <person name="Sutcliffe I.C."/>
            <person name="Hutchings M.I."/>
        </authorList>
        <dbReference type="AGRICOLA" id="IND43866162"/>
    </citation>
    <scope>DISCUSSION OF SEQUENCE</scope>
</reference>
<proteinExistence type="inferred from homology"/>